<reference key="1">
    <citation type="journal article" date="1998" name="Biochem. Biophys. Res. Commun.">
        <title>Molecular cDNA cloning and tissue distribution of mRNA encoding a novel ATP-binding cassette (ABC) half-transporter.</title>
        <authorList>
            <person name="Hirsch-Ernst K.I."/>
            <person name="Gaini-Rahimi S."/>
            <person name="Ernst B.-P."/>
            <person name="Schmitz-Salue C."/>
            <person name="Blume S."/>
            <person name="Kahl G.F."/>
        </authorList>
    </citation>
    <scope>NUCLEOTIDE SEQUENCE [MRNA]</scope>
    <scope>TISSUE SPECIFICITY</scope>
    <source>
        <strain>Wistar</strain>
        <tissue>Hepatocyte</tissue>
    </source>
</reference>
<reference key="2">
    <citation type="journal article" date="2004" name="Genome Res.">
        <title>The status, quality, and expansion of the NIH full-length cDNA project: the Mammalian Gene Collection (MGC).</title>
        <authorList>
            <consortium name="The MGC Project Team"/>
        </authorList>
    </citation>
    <scope>NUCLEOTIDE SEQUENCE [LARGE SCALE MRNA]</scope>
    <source>
        <tissue>Heart</tissue>
    </source>
</reference>
<reference key="3">
    <citation type="journal article" date="2006" name="Int. J. Androl.">
        <title>Molecular cloning of several rat ABC transporters including a new ABC transporter, Abcb8, and their expression in rat testis.</title>
        <authorList>
            <person name="Melaine N."/>
            <person name="Satie A.-P."/>
            <person name="Lassurguere J."/>
            <person name="Desmots S."/>
            <person name="Jegou B."/>
            <person name="Samson M."/>
        </authorList>
    </citation>
    <scope>TISSUE SPECIFICITY</scope>
</reference>
<reference key="4">
    <citation type="journal article" date="2008" name="Am. J. Physiol.">
        <title>Vesicular localization of the rat ATP-binding cassette half-transporter rAbcb6.</title>
        <authorList>
            <person name="Jalil Y.A."/>
            <person name="Ritz V."/>
            <person name="Jakimenko A."/>
            <person name="Schmitz-Salue C."/>
            <person name="Siebert H."/>
            <person name="Awuah D."/>
            <person name="Kotthaus A."/>
            <person name="Kietzmann T."/>
            <person name="Ziemann C."/>
            <person name="Hirsch-Ernst K.I."/>
        </authorList>
    </citation>
    <scope>GLYCOSYLATION</scope>
    <scope>SUBCELLULAR LOCATION</scope>
    <scope>FUNCTION</scope>
</reference>
<evidence type="ECO:0000250" key="1"/>
<evidence type="ECO:0000250" key="2">
    <source>
        <dbReference type="UniProtKB" id="Q9DC29"/>
    </source>
</evidence>
<evidence type="ECO:0000250" key="3">
    <source>
        <dbReference type="UniProtKB" id="Q9NP58"/>
    </source>
</evidence>
<evidence type="ECO:0000255" key="4"/>
<evidence type="ECO:0000255" key="5">
    <source>
        <dbReference type="PROSITE-ProRule" id="PRU00434"/>
    </source>
</evidence>
<evidence type="ECO:0000255" key="6">
    <source>
        <dbReference type="PROSITE-ProRule" id="PRU00441"/>
    </source>
</evidence>
<evidence type="ECO:0000269" key="7">
    <source>
    </source>
</evidence>
<evidence type="ECO:0000269" key="8">
    <source>
    </source>
</evidence>
<evidence type="ECO:0000269" key="9">
    <source>
    </source>
</evidence>
<evidence type="ECO:0000305" key="10"/>
<evidence type="ECO:0000312" key="11">
    <source>
        <dbReference type="RGD" id="71077"/>
    </source>
</evidence>
<organism>
    <name type="scientific">Rattus norvegicus</name>
    <name type="common">Rat</name>
    <dbReference type="NCBI Taxonomy" id="10116"/>
    <lineage>
        <taxon>Eukaryota</taxon>
        <taxon>Metazoa</taxon>
        <taxon>Chordata</taxon>
        <taxon>Craniata</taxon>
        <taxon>Vertebrata</taxon>
        <taxon>Euteleostomi</taxon>
        <taxon>Mammalia</taxon>
        <taxon>Eutheria</taxon>
        <taxon>Euarchontoglires</taxon>
        <taxon>Glires</taxon>
        <taxon>Rodentia</taxon>
        <taxon>Myomorpha</taxon>
        <taxon>Muroidea</taxon>
        <taxon>Muridae</taxon>
        <taxon>Murinae</taxon>
        <taxon>Rattus</taxon>
    </lineage>
</organism>
<name>ABCB6_RAT</name>
<accession>O70595</accession>
<proteinExistence type="evidence at protein level"/>
<dbReference type="EC" id="7.6.2.5" evidence="3"/>
<dbReference type="EMBL" id="AJ003004">
    <property type="protein sequence ID" value="CAA05793.1"/>
    <property type="molecule type" value="mRNA"/>
</dbReference>
<dbReference type="EMBL" id="BC085712">
    <property type="protein sequence ID" value="AAH85712.1"/>
    <property type="molecule type" value="mRNA"/>
</dbReference>
<dbReference type="PIR" id="JE0248">
    <property type="entry name" value="JE0248"/>
</dbReference>
<dbReference type="RefSeq" id="NP_542149.1">
    <property type="nucleotide sequence ID" value="NM_080582.1"/>
</dbReference>
<dbReference type="SMR" id="O70595"/>
<dbReference type="FunCoup" id="O70595">
    <property type="interactions" value="1991"/>
</dbReference>
<dbReference type="STRING" id="10116.ENSRNOP00000025627"/>
<dbReference type="GlyGen" id="O70595">
    <property type="glycosylation" value="1 site"/>
</dbReference>
<dbReference type="PhosphoSitePlus" id="O70595"/>
<dbReference type="SwissPalm" id="O70595"/>
<dbReference type="jPOST" id="O70595"/>
<dbReference type="PaxDb" id="10116-ENSRNOP00000025627"/>
<dbReference type="Ensembl" id="ENSRNOT00000025627.7">
    <property type="protein sequence ID" value="ENSRNOP00000025627.3"/>
    <property type="gene ID" value="ENSRNOG00000018697.8"/>
</dbReference>
<dbReference type="GeneID" id="140669"/>
<dbReference type="KEGG" id="rno:140669"/>
<dbReference type="UCSC" id="RGD:71077">
    <property type="organism name" value="rat"/>
</dbReference>
<dbReference type="AGR" id="RGD:71077"/>
<dbReference type="CTD" id="10058"/>
<dbReference type="RGD" id="71077">
    <property type="gene designation" value="Abcb6"/>
</dbReference>
<dbReference type="eggNOG" id="KOG0056">
    <property type="taxonomic scope" value="Eukaryota"/>
</dbReference>
<dbReference type="GeneTree" id="ENSGT00940000156160"/>
<dbReference type="HOGENOM" id="CLU_000604_32_0_1"/>
<dbReference type="InParanoid" id="O70595"/>
<dbReference type="OMA" id="YYGAEHY"/>
<dbReference type="OrthoDB" id="6500128at2759"/>
<dbReference type="PhylomeDB" id="O70595"/>
<dbReference type="TreeFam" id="TF105194"/>
<dbReference type="Reactome" id="R-RNO-1369007">
    <property type="pathway name" value="Mitochondrial ABC transporters"/>
</dbReference>
<dbReference type="PRO" id="PR:O70595"/>
<dbReference type="Proteomes" id="UP000002494">
    <property type="component" value="Chromosome 9"/>
</dbReference>
<dbReference type="Bgee" id="ENSRNOG00000018697">
    <property type="expression patterns" value="Expressed in pancreas and 19 other cell types or tissues"/>
</dbReference>
<dbReference type="ExpressionAtlas" id="O70595">
    <property type="expression patterns" value="baseline and differential"/>
</dbReference>
<dbReference type="GO" id="GO:0005829">
    <property type="term" value="C:cytosol"/>
    <property type="evidence" value="ECO:0007669"/>
    <property type="project" value="Ensembl"/>
</dbReference>
<dbReference type="GO" id="GO:0031901">
    <property type="term" value="C:early endosome membrane"/>
    <property type="evidence" value="ECO:0000314"/>
    <property type="project" value="UniProtKB"/>
</dbReference>
<dbReference type="GO" id="GO:0036020">
    <property type="term" value="C:endolysosome membrane"/>
    <property type="evidence" value="ECO:0000314"/>
    <property type="project" value="UniProtKB"/>
</dbReference>
<dbReference type="GO" id="GO:0005783">
    <property type="term" value="C:endoplasmic reticulum"/>
    <property type="evidence" value="ECO:0000266"/>
    <property type="project" value="RGD"/>
</dbReference>
<dbReference type="GO" id="GO:0005789">
    <property type="term" value="C:endoplasmic reticulum membrane"/>
    <property type="evidence" value="ECO:0000250"/>
    <property type="project" value="UniProtKB"/>
</dbReference>
<dbReference type="GO" id="GO:0005768">
    <property type="term" value="C:endosome"/>
    <property type="evidence" value="ECO:0000250"/>
    <property type="project" value="UniProtKB"/>
</dbReference>
<dbReference type="GO" id="GO:0070062">
    <property type="term" value="C:extracellular exosome"/>
    <property type="evidence" value="ECO:0000250"/>
    <property type="project" value="UniProtKB"/>
</dbReference>
<dbReference type="GO" id="GO:0005794">
    <property type="term" value="C:Golgi apparatus"/>
    <property type="evidence" value="ECO:0000250"/>
    <property type="project" value="UniProtKB"/>
</dbReference>
<dbReference type="GO" id="GO:0000139">
    <property type="term" value="C:Golgi membrane"/>
    <property type="evidence" value="ECO:0007669"/>
    <property type="project" value="UniProtKB-SubCell"/>
</dbReference>
<dbReference type="GO" id="GO:0031902">
    <property type="term" value="C:late endosome membrane"/>
    <property type="evidence" value="ECO:0000314"/>
    <property type="project" value="UniProtKB"/>
</dbReference>
<dbReference type="GO" id="GO:0005765">
    <property type="term" value="C:lysosomal membrane"/>
    <property type="evidence" value="ECO:0000314"/>
    <property type="project" value="UniProtKB"/>
</dbReference>
<dbReference type="GO" id="GO:0033162">
    <property type="term" value="C:melanosome membrane"/>
    <property type="evidence" value="ECO:0000250"/>
    <property type="project" value="UniProtKB"/>
</dbReference>
<dbReference type="GO" id="GO:0005740">
    <property type="term" value="C:mitochondrial envelope"/>
    <property type="evidence" value="ECO:0000266"/>
    <property type="project" value="RGD"/>
</dbReference>
<dbReference type="GO" id="GO:0005741">
    <property type="term" value="C:mitochondrial outer membrane"/>
    <property type="evidence" value="ECO:0000266"/>
    <property type="project" value="RGD"/>
</dbReference>
<dbReference type="GO" id="GO:0005739">
    <property type="term" value="C:mitochondrion"/>
    <property type="evidence" value="ECO:0000266"/>
    <property type="project" value="RGD"/>
</dbReference>
<dbReference type="GO" id="GO:0032585">
    <property type="term" value="C:multivesicular body membrane"/>
    <property type="evidence" value="ECO:0000250"/>
    <property type="project" value="UniProtKB"/>
</dbReference>
<dbReference type="GO" id="GO:0005654">
    <property type="term" value="C:nucleoplasm"/>
    <property type="evidence" value="ECO:0007669"/>
    <property type="project" value="Ensembl"/>
</dbReference>
<dbReference type="GO" id="GO:0005886">
    <property type="term" value="C:plasma membrane"/>
    <property type="evidence" value="ECO:0000250"/>
    <property type="project" value="UniProtKB"/>
</dbReference>
<dbReference type="GO" id="GO:0005774">
    <property type="term" value="C:vacuolar membrane"/>
    <property type="evidence" value="ECO:0000318"/>
    <property type="project" value="GO_Central"/>
</dbReference>
<dbReference type="GO" id="GO:0015439">
    <property type="term" value="F:ABC-type heme transporter activity"/>
    <property type="evidence" value="ECO:0000266"/>
    <property type="project" value="RGD"/>
</dbReference>
<dbReference type="GO" id="GO:0140359">
    <property type="term" value="F:ABC-type transporter activity"/>
    <property type="evidence" value="ECO:0000250"/>
    <property type="project" value="UniProtKB"/>
</dbReference>
<dbReference type="GO" id="GO:0005524">
    <property type="term" value="F:ATP binding"/>
    <property type="evidence" value="ECO:0000250"/>
    <property type="project" value="UniProtKB"/>
</dbReference>
<dbReference type="GO" id="GO:0016887">
    <property type="term" value="F:ATP hydrolysis activity"/>
    <property type="evidence" value="ECO:0000250"/>
    <property type="project" value="UniProtKB"/>
</dbReference>
<dbReference type="GO" id="GO:0015562">
    <property type="term" value="F:efflux transmembrane transporter activity"/>
    <property type="evidence" value="ECO:0000266"/>
    <property type="project" value="RGD"/>
</dbReference>
<dbReference type="GO" id="GO:0020037">
    <property type="term" value="F:heme binding"/>
    <property type="evidence" value="ECO:0000266"/>
    <property type="project" value="RGD"/>
</dbReference>
<dbReference type="GO" id="GO:0046906">
    <property type="term" value="F:tetrapyrrole binding"/>
    <property type="evidence" value="ECO:0000250"/>
    <property type="project" value="UniProtKB"/>
</dbReference>
<dbReference type="GO" id="GO:0007420">
    <property type="term" value="P:brain development"/>
    <property type="evidence" value="ECO:0000266"/>
    <property type="project" value="RGD"/>
</dbReference>
<dbReference type="GO" id="GO:0098849">
    <property type="term" value="P:cellular detoxification of cadmium ion"/>
    <property type="evidence" value="ECO:0000250"/>
    <property type="project" value="UniProtKB"/>
</dbReference>
<dbReference type="GO" id="GO:0042168">
    <property type="term" value="P:heme metabolic process"/>
    <property type="evidence" value="ECO:0000250"/>
    <property type="project" value="UniProtKB"/>
</dbReference>
<dbReference type="GO" id="GO:0035351">
    <property type="term" value="P:heme transmembrane transport"/>
    <property type="evidence" value="ECO:0000250"/>
    <property type="project" value="UniProtKB"/>
</dbReference>
<dbReference type="GO" id="GO:0015886">
    <property type="term" value="P:heme transport"/>
    <property type="evidence" value="ECO:0000266"/>
    <property type="project" value="RGD"/>
</dbReference>
<dbReference type="GO" id="GO:0006878">
    <property type="term" value="P:intracellular copper ion homeostasis"/>
    <property type="evidence" value="ECO:0000314"/>
    <property type="project" value="UniProtKB"/>
</dbReference>
<dbReference type="GO" id="GO:1903232">
    <property type="term" value="P:melanosome assembly"/>
    <property type="evidence" value="ECO:0000250"/>
    <property type="project" value="UniProtKB"/>
</dbReference>
<dbReference type="GO" id="GO:0006779">
    <property type="term" value="P:porphyrin-containing compound biosynthetic process"/>
    <property type="evidence" value="ECO:0000266"/>
    <property type="project" value="RGD"/>
</dbReference>
<dbReference type="GO" id="GO:0006778">
    <property type="term" value="P:porphyrin-containing compound metabolic process"/>
    <property type="evidence" value="ECO:0000250"/>
    <property type="project" value="UniProtKB"/>
</dbReference>
<dbReference type="GO" id="GO:0043588">
    <property type="term" value="P:skin development"/>
    <property type="evidence" value="ECO:0000266"/>
    <property type="project" value="RGD"/>
</dbReference>
<dbReference type="GO" id="GO:0033013">
    <property type="term" value="P:tetrapyrrole metabolic process"/>
    <property type="evidence" value="ECO:0000250"/>
    <property type="project" value="UniProtKB"/>
</dbReference>
<dbReference type="GO" id="GO:0055085">
    <property type="term" value="P:transmembrane transport"/>
    <property type="evidence" value="ECO:0000318"/>
    <property type="project" value="GO_Central"/>
</dbReference>
<dbReference type="CDD" id="cd18581">
    <property type="entry name" value="ABC_6TM_ABCB6"/>
    <property type="match status" value="1"/>
</dbReference>
<dbReference type="CDD" id="cd03253">
    <property type="entry name" value="ABCC_ATM1_transporter"/>
    <property type="match status" value="1"/>
</dbReference>
<dbReference type="FunFam" id="1.20.1560.10:FF:000022">
    <property type="entry name" value="ATP-binding cassette sub-family B member 6, mitochondrial"/>
    <property type="match status" value="1"/>
</dbReference>
<dbReference type="FunFam" id="3.40.50.300:FF:000186">
    <property type="entry name" value="ATP-binding cassette sub-family B member 7, mitochondrial"/>
    <property type="match status" value="1"/>
</dbReference>
<dbReference type="Gene3D" id="1.20.1560.10">
    <property type="entry name" value="ABC transporter type 1, transmembrane domain"/>
    <property type="match status" value="1"/>
</dbReference>
<dbReference type="Gene3D" id="3.40.50.300">
    <property type="entry name" value="P-loop containing nucleotide triphosphate hydrolases"/>
    <property type="match status" value="1"/>
</dbReference>
<dbReference type="InterPro" id="IPR003593">
    <property type="entry name" value="AAA+_ATPase"/>
</dbReference>
<dbReference type="InterPro" id="IPR011527">
    <property type="entry name" value="ABC1_TM_dom"/>
</dbReference>
<dbReference type="InterPro" id="IPR036640">
    <property type="entry name" value="ABC1_TM_sf"/>
</dbReference>
<dbReference type="InterPro" id="IPR003439">
    <property type="entry name" value="ABC_transporter-like_ATP-bd"/>
</dbReference>
<dbReference type="InterPro" id="IPR017871">
    <property type="entry name" value="ABC_transporter-like_CS"/>
</dbReference>
<dbReference type="InterPro" id="IPR032410">
    <property type="entry name" value="ABCB6_N"/>
</dbReference>
<dbReference type="InterPro" id="IPR027417">
    <property type="entry name" value="P-loop_NTPase"/>
</dbReference>
<dbReference type="InterPro" id="IPR039421">
    <property type="entry name" value="Type_1_exporter"/>
</dbReference>
<dbReference type="PANTHER" id="PTHR24221">
    <property type="entry name" value="ATP-BINDING CASSETTE SUB-FAMILY B"/>
    <property type="match status" value="1"/>
</dbReference>
<dbReference type="PANTHER" id="PTHR24221:SF654">
    <property type="entry name" value="ATP-BINDING CASSETTE SUB-FAMILY B MEMBER 6"/>
    <property type="match status" value="1"/>
</dbReference>
<dbReference type="Pfam" id="PF00664">
    <property type="entry name" value="ABC_membrane"/>
    <property type="match status" value="1"/>
</dbReference>
<dbReference type="Pfam" id="PF00005">
    <property type="entry name" value="ABC_tran"/>
    <property type="match status" value="1"/>
</dbReference>
<dbReference type="Pfam" id="PF16185">
    <property type="entry name" value="MTABC_N"/>
    <property type="match status" value="1"/>
</dbReference>
<dbReference type="SMART" id="SM00382">
    <property type="entry name" value="AAA"/>
    <property type="match status" value="1"/>
</dbReference>
<dbReference type="SUPFAM" id="SSF90123">
    <property type="entry name" value="ABC transporter transmembrane region"/>
    <property type="match status" value="1"/>
</dbReference>
<dbReference type="SUPFAM" id="SSF52540">
    <property type="entry name" value="P-loop containing nucleoside triphosphate hydrolases"/>
    <property type="match status" value="1"/>
</dbReference>
<dbReference type="PROSITE" id="PS50929">
    <property type="entry name" value="ABC_TM1F"/>
    <property type="match status" value="1"/>
</dbReference>
<dbReference type="PROSITE" id="PS00211">
    <property type="entry name" value="ABC_TRANSPORTER_1"/>
    <property type="match status" value="1"/>
</dbReference>
<dbReference type="PROSITE" id="PS50893">
    <property type="entry name" value="ABC_TRANSPORTER_2"/>
    <property type="match status" value="1"/>
</dbReference>
<gene>
    <name evidence="11" type="primary">Abcb6</name>
    <name type="synonym">Umat</name>
</gene>
<sequence>MVTVGNYCEAEGPAGPAWTQNGLSPCFFYTLVPSTLMTLGVLALVLVLPCRRREVPAGTEELSWAAGPRVAPYALQLSLAILQMALPLASLAGRVGTARGVRLPGYLLLASVLESLASACGLWLLVVERSQARQSLAMGVWMKFRHSLGLLLLWTVTFAAENLVLVSWNSPQWWWSRADLGQQVQFGLWVLRYMTSGGLFILGLWAPGLRPQSYTLHVNEEDQDGGRNQGRSTDPRSTWRDLGRKLRLLSGYLWPRGSPSLQLTVLLCMGLMGLDRALNVLVPIFYRDIVNLLTSKAPWSSLAWTVTTYVFLKFLQGGGTGSTGFVSNLRTFLWIRVQQFTSRGVELRLFSHLHELSLRWHLGRRTGEVLRIVDRGTSSVTGLLSYLVFNIIPTLADIIIGIIYFSMFFNAWFGLIVFLCMSLYLILTIMVTEWRAKFRRDMNTQENATRARAVDSLLNFETVKYYNAEGYELERYREAILKFQGLEWKSTASLVLLNQTQNMVIGFGLLAGSLLCAYFVSERRLQVGDFVLFGTYITQLYMPLNWFGTYYRMIQTNFIDMENMFDLLKEETEVKDVPGAGPLRFHKGRVEFENVHFSYADGRETLQDVSFTVMPGQTVALVGPSGAGKSTILRLLFRFYDISSGCIRIDGQDISQVTQISLRSHIGVVPQDTVLFNDTIANNIRYGRVTAGDSEIQAAAQAAGIHDAILSFPEGYETQVGERGLKLSGGEKQRVAIARTILKAPDIILLDEATSALDTSNERAIQASLAKVCTNRTTIVVAHRLSTVVNADQILVIKDGCIIERGRHEALLSRGGVYAEMWQLQQQGQETVPEDS</sequence>
<protein>
    <recommendedName>
        <fullName evidence="10">ATP-binding cassette sub-family B member 6</fullName>
    </recommendedName>
    <alternativeName>
        <fullName evidence="3">ABC-type heme transporter ABCB6</fullName>
        <ecNumber evidence="3">7.6.2.5</ecNumber>
    </alternativeName>
    <alternativeName>
        <fullName>Ubiquitously-expressed mammalian ABC half transporter</fullName>
    </alternativeName>
</protein>
<comment type="function">
    <text evidence="3 8">ATP-dependent transporter that catalyzes the transport of a broad-spectrum of porphyrins from the cytoplasm to the extracellular space through the plasma membrane or into the vesicle lumen (By similarity). May also function as an ATP-dependent importer of porphyrins from the cytoplasm into the mitochondria, in turn may participate in the de novo heme biosynthesis regulation and in the coordination of heme and iron homeostasis during phenylhydrazine stress (By similarity). May play a key role in the early steps of melanogenesis producing PMEL amyloid fibrils (By similarity). In vitro, it confers to cells a resistance to toxic metal such as arsenic and cadmium and against chemotherapeutics agent such as 5-fluorouracil, SN-38 and vincristin (By similarity). In addition may play a role in the transition metal homeostasis (PubMed:18160489).</text>
</comment>
<comment type="catalytic activity">
    <reaction evidence="3">
        <text>heme b(in) + ATP + H2O = heme b(out) + ADP + phosphate + H(+)</text>
        <dbReference type="Rhea" id="RHEA:19261"/>
        <dbReference type="ChEBI" id="CHEBI:15377"/>
        <dbReference type="ChEBI" id="CHEBI:15378"/>
        <dbReference type="ChEBI" id="CHEBI:30616"/>
        <dbReference type="ChEBI" id="CHEBI:43474"/>
        <dbReference type="ChEBI" id="CHEBI:60344"/>
        <dbReference type="ChEBI" id="CHEBI:456216"/>
        <dbReference type="EC" id="7.6.2.5"/>
    </reaction>
    <physiologicalReaction direction="left-to-right" evidence="3">
        <dbReference type="Rhea" id="RHEA:19262"/>
    </physiologicalReaction>
</comment>
<comment type="catalytic activity">
    <reaction evidence="3">
        <text>coproporphyrin III(in) + ATP + H2O = coproporphyrin III(out) + ADP + phosphate + H(+)</text>
        <dbReference type="Rhea" id="RHEA:66664"/>
        <dbReference type="ChEBI" id="CHEBI:15377"/>
        <dbReference type="ChEBI" id="CHEBI:15378"/>
        <dbReference type="ChEBI" id="CHEBI:30616"/>
        <dbReference type="ChEBI" id="CHEBI:43474"/>
        <dbReference type="ChEBI" id="CHEBI:131725"/>
        <dbReference type="ChEBI" id="CHEBI:456216"/>
    </reaction>
    <physiologicalReaction direction="left-to-right" evidence="3">
        <dbReference type="Rhea" id="RHEA:66665"/>
    </physiologicalReaction>
</comment>
<comment type="catalytic activity">
    <reaction evidence="3">
        <text>pheophorbide a(in) + ATP + H2O = pheophorbide a(out) + ADP + phosphate + H(+)</text>
        <dbReference type="Rhea" id="RHEA:61360"/>
        <dbReference type="ChEBI" id="CHEBI:15377"/>
        <dbReference type="ChEBI" id="CHEBI:15378"/>
        <dbReference type="ChEBI" id="CHEBI:30616"/>
        <dbReference type="ChEBI" id="CHEBI:43474"/>
        <dbReference type="ChEBI" id="CHEBI:58687"/>
        <dbReference type="ChEBI" id="CHEBI:456216"/>
    </reaction>
    <physiologicalReaction direction="left-to-right" evidence="3">
        <dbReference type="Rhea" id="RHEA:61361"/>
    </physiologicalReaction>
</comment>
<comment type="catalytic activity">
    <reaction evidence="2">
        <text>coproporphyrinogen III(in) + ATP + H2O = coproporphyrinogen III(out) + ADP + phosphate + H(+)</text>
        <dbReference type="Rhea" id="RHEA:66680"/>
        <dbReference type="ChEBI" id="CHEBI:15377"/>
        <dbReference type="ChEBI" id="CHEBI:15378"/>
        <dbReference type="ChEBI" id="CHEBI:30616"/>
        <dbReference type="ChEBI" id="CHEBI:43474"/>
        <dbReference type="ChEBI" id="CHEBI:57309"/>
        <dbReference type="ChEBI" id="CHEBI:456216"/>
    </reaction>
    <physiologicalReaction direction="left-to-right" evidence="2">
        <dbReference type="Rhea" id="RHEA:66681"/>
    </physiologicalReaction>
</comment>
<comment type="catalytic activity">
    <reaction evidence="3">
        <text>protoporphyrin IX(in) + ATP + H2O = protoporphyrin IX(out) + ADP + phosphate + H(+)</text>
        <dbReference type="Rhea" id="RHEA:61336"/>
        <dbReference type="ChEBI" id="CHEBI:15377"/>
        <dbReference type="ChEBI" id="CHEBI:15378"/>
        <dbReference type="ChEBI" id="CHEBI:30616"/>
        <dbReference type="ChEBI" id="CHEBI:43474"/>
        <dbReference type="ChEBI" id="CHEBI:57306"/>
        <dbReference type="ChEBI" id="CHEBI:456216"/>
    </reaction>
    <physiologicalReaction direction="left-to-right" evidence="3">
        <dbReference type="Rhea" id="RHEA:61337"/>
    </physiologicalReaction>
</comment>
<comment type="catalytic activity">
    <reaction evidence="2">
        <text>coproporphyrin I(in) + ATP + H2O = coproporphyrin I(out) + ADP + phosphate + H(+)</text>
        <dbReference type="Rhea" id="RHEA:66768"/>
        <dbReference type="ChEBI" id="CHEBI:15377"/>
        <dbReference type="ChEBI" id="CHEBI:15378"/>
        <dbReference type="ChEBI" id="CHEBI:30616"/>
        <dbReference type="ChEBI" id="CHEBI:43474"/>
        <dbReference type="ChEBI" id="CHEBI:167478"/>
        <dbReference type="ChEBI" id="CHEBI:456216"/>
    </reaction>
    <physiologicalReaction direction="left-to-right" evidence="2">
        <dbReference type="Rhea" id="RHEA:66769"/>
    </physiologicalReaction>
</comment>
<comment type="catalytic activity">
    <reaction evidence="2">
        <text>uroporphyrin I(in) + ATP + H2O = uroporphyrin I(out) + ADP + phosphate + H(+)</text>
        <dbReference type="Rhea" id="RHEA:66772"/>
        <dbReference type="ChEBI" id="CHEBI:15377"/>
        <dbReference type="ChEBI" id="CHEBI:15378"/>
        <dbReference type="ChEBI" id="CHEBI:30616"/>
        <dbReference type="ChEBI" id="CHEBI:43474"/>
        <dbReference type="ChEBI" id="CHEBI:167480"/>
        <dbReference type="ChEBI" id="CHEBI:456216"/>
    </reaction>
    <physiologicalReaction direction="left-to-right" evidence="2">
        <dbReference type="Rhea" id="RHEA:66773"/>
    </physiologicalReaction>
</comment>
<comment type="catalytic activity">
    <reaction evidence="2">
        <text>uroporphyrin III(in) + ATP + H2O = uroporphyrin III(out) + ADP + phosphate + H(+)</text>
        <dbReference type="Rhea" id="RHEA:66776"/>
        <dbReference type="ChEBI" id="CHEBI:15377"/>
        <dbReference type="ChEBI" id="CHEBI:15378"/>
        <dbReference type="ChEBI" id="CHEBI:30616"/>
        <dbReference type="ChEBI" id="CHEBI:43474"/>
        <dbReference type="ChEBI" id="CHEBI:167479"/>
        <dbReference type="ChEBI" id="CHEBI:456216"/>
    </reaction>
    <physiologicalReaction direction="left-to-right" evidence="2">
        <dbReference type="Rhea" id="RHEA:66777"/>
    </physiologicalReaction>
</comment>
<comment type="subunit">
    <text evidence="3">Homodimer.</text>
</comment>
<comment type="subcellular location">
    <subcellularLocation>
        <location evidence="3">Cell membrane</location>
        <topology evidence="4">Multi-pass membrane protein</topology>
    </subcellularLocation>
    <subcellularLocation>
        <location evidence="3">Mitochondrion outer membrane</location>
        <topology evidence="4">Multi-pass membrane protein</topology>
    </subcellularLocation>
    <subcellularLocation>
        <location evidence="3">Endoplasmic reticulum membrane</location>
        <topology evidence="4">Multi-pass membrane protein</topology>
    </subcellularLocation>
    <subcellularLocation>
        <location evidence="3">Golgi apparatus membrane</location>
        <topology evidence="4">Multi-pass membrane protein</topology>
    </subcellularLocation>
    <subcellularLocation>
        <location evidence="3">Endosome membrane</location>
        <topology evidence="4">Multi-pass membrane protein</topology>
    </subcellularLocation>
    <subcellularLocation>
        <location evidence="8">Lysosome membrane</location>
    </subcellularLocation>
    <subcellularLocation>
        <location evidence="8">Late endosome membrane</location>
    </subcellularLocation>
    <subcellularLocation>
        <location evidence="8">Early endosome membrane</location>
    </subcellularLocation>
    <subcellularLocation>
        <location evidence="3">Secreted</location>
        <location evidence="3">Extracellular exosome</location>
    </subcellularLocation>
    <subcellularLocation>
        <location evidence="3">Mitochondrion</location>
    </subcellularLocation>
    <subcellularLocation>
        <location evidence="3">Endosome</location>
        <location evidence="3">Multivesicular body membrane</location>
    </subcellularLocation>
    <subcellularLocation>
        <location evidence="3">Melanosome membrane</location>
    </subcellularLocation>
    <text evidence="3 8">Present in the membrane of mature erythrocytes and in exosomes released from reticulocytes during the final steps of erythroid maturation. Traffics from endoplasmic reticulum to Golgi during its glycans's maturation, therefrom is first targeted to the plasma membrane, and is rapidly internalized through endocytosis to be distributed to the limiting membrane of multivesicular bodies and lysosomes. Localized on the limiting membrane of early melanosomes of pigment cells (By similarity). Targeted to the endolysosomal compartment (PubMed:18160489).</text>
</comment>
<comment type="tissue specificity">
    <text evidence="7 9">Ubiquitously expressed. Highly expressed in testis by meiotic pachytene spermatocytes and post-meiotic early spermatids.</text>
</comment>
<comment type="domain">
    <text evidence="3">Contains two independently folding units, the N-terminal transmembrane domain (residues 1-205) and the ABC-core domain (206-842) are respectively responsible for the lysosomal targeting and the ATPase activity.</text>
</comment>
<comment type="PTM">
    <text evidence="8">N-glycosylated.</text>
</comment>
<comment type="similarity">
    <text evidence="10">Belongs to the ABC transporter superfamily. ABCB family. Heavy Metal importer (TC 3.A.1.210) subfamily.</text>
</comment>
<comment type="caution">
    <text evidence="3">To date, the intracellular localization of ABCB6 is a matter of debate, with conflicting reports suggesting mitochondrial or endolysosomal localization, therefore questioning the requirement of ABCB6 in the mitochondrial import of porphyrins.</text>
</comment>
<feature type="chain" id="PRO_0000268679" description="ATP-binding cassette sub-family B member 6">
    <location>
        <begin position="1"/>
        <end position="836"/>
    </location>
</feature>
<feature type="topological domain" description="Lumenal" evidence="3">
    <location>
        <begin position="1"/>
        <end position="26"/>
    </location>
</feature>
<feature type="transmembrane region" description="Helical" evidence="4">
    <location>
        <begin position="27"/>
        <end position="47"/>
    </location>
</feature>
<feature type="topological domain" description="Cytoplasmic" evidence="10">
    <location>
        <begin position="48"/>
        <end position="72"/>
    </location>
</feature>
<feature type="transmembrane region" description="Helical" evidence="4">
    <location>
        <begin position="73"/>
        <end position="93"/>
    </location>
</feature>
<feature type="topological domain" description="Lumenal" evidence="3">
    <location>
        <begin position="94"/>
        <end position="106"/>
    </location>
</feature>
<feature type="transmembrane region" description="Helical" evidence="4">
    <location>
        <begin position="107"/>
        <end position="127"/>
    </location>
</feature>
<feature type="topological domain" description="Cytoplasmic" evidence="10">
    <location>
        <begin position="128"/>
        <end position="147"/>
    </location>
</feature>
<feature type="transmembrane region" description="Helical" evidence="4">
    <location>
        <begin position="148"/>
        <end position="168"/>
    </location>
</feature>
<feature type="topological domain" description="Lumenal" evidence="3">
    <location>
        <begin position="169"/>
        <end position="185"/>
    </location>
</feature>
<feature type="transmembrane region" description="Helical" evidence="4">
    <location>
        <begin position="186"/>
        <end position="206"/>
    </location>
</feature>
<feature type="topological domain" description="Cytoplasmic" evidence="10">
    <location>
        <begin position="207"/>
        <end position="264"/>
    </location>
</feature>
<feature type="transmembrane region" description="Helical" evidence="4 6">
    <location>
        <begin position="265"/>
        <end position="285"/>
    </location>
</feature>
<feature type="topological domain" description="Lumenal" evidence="3">
    <location>
        <begin position="286"/>
        <end position="305"/>
    </location>
</feature>
<feature type="transmembrane region" description="Helical" evidence="4 6">
    <location>
        <begin position="306"/>
        <end position="326"/>
    </location>
</feature>
<feature type="topological domain" description="Cytoplasmic" evidence="10">
    <location>
        <begin position="327"/>
        <end position="375"/>
    </location>
</feature>
<feature type="transmembrane region" description="Helical" evidence="4 6">
    <location>
        <begin position="376"/>
        <end position="396"/>
    </location>
</feature>
<feature type="topological domain" description="Lumenal" evidence="3">
    <location>
        <position position="397"/>
    </location>
</feature>
<feature type="transmembrane region" description="Helical" evidence="4 6">
    <location>
        <begin position="398"/>
        <end position="418"/>
    </location>
</feature>
<feature type="topological domain" description="Cytoplasmic" evidence="10">
    <location>
        <begin position="419"/>
        <end position="499"/>
    </location>
</feature>
<feature type="transmembrane region" description="Helical" evidence="4 6">
    <location>
        <begin position="500"/>
        <end position="520"/>
    </location>
</feature>
<feature type="topological domain" description="Lumenal" evidence="3">
    <location>
        <begin position="521"/>
        <end position="529"/>
    </location>
</feature>
<feature type="transmembrane region" description="Helical" evidence="4 6">
    <location>
        <begin position="530"/>
        <end position="550"/>
    </location>
</feature>
<feature type="topological domain" description="Cytoplasmic" evidence="10">
    <location>
        <begin position="551"/>
        <end position="836"/>
    </location>
</feature>
<feature type="domain" description="ABC transmembrane type-1" evidence="6">
    <location>
        <begin position="265"/>
        <end position="556"/>
    </location>
</feature>
<feature type="domain" description="ABC transporter" evidence="5">
    <location>
        <begin position="590"/>
        <end position="824"/>
    </location>
</feature>
<feature type="region of interest" description="Required for ATPase activity" evidence="3">
    <location>
        <begin position="1"/>
        <end position="236"/>
    </location>
</feature>
<feature type="region of interest" description="Required for the lysosomal targeting" evidence="3">
    <location>
        <begin position="1"/>
        <end position="205"/>
    </location>
</feature>
<feature type="binding site" evidence="1">
    <location>
        <position position="599"/>
    </location>
    <ligand>
        <name>ATP</name>
        <dbReference type="ChEBI" id="CHEBI:30616"/>
    </ligand>
</feature>
<feature type="binding site" evidence="5">
    <location>
        <begin position="623"/>
        <end position="634"/>
    </location>
    <ligand>
        <name>ATP</name>
        <dbReference type="ChEBI" id="CHEBI:30616"/>
    </ligand>
</feature>
<feature type="disulfide bond" evidence="3">
    <location>
        <begin position="8"/>
        <end position="26"/>
    </location>
</feature>
<keyword id="KW-0067">ATP-binding</keyword>
<keyword id="KW-1003">Cell membrane</keyword>
<keyword id="KW-1015">Disulfide bond</keyword>
<keyword id="KW-0256">Endoplasmic reticulum</keyword>
<keyword id="KW-0967">Endosome</keyword>
<keyword id="KW-0333">Golgi apparatus</keyword>
<keyword id="KW-0458">Lysosome</keyword>
<keyword id="KW-0472">Membrane</keyword>
<keyword id="KW-0496">Mitochondrion</keyword>
<keyword id="KW-1000">Mitochondrion outer membrane</keyword>
<keyword id="KW-0547">Nucleotide-binding</keyword>
<keyword id="KW-1185">Reference proteome</keyword>
<keyword id="KW-0964">Secreted</keyword>
<keyword id="KW-1278">Translocase</keyword>
<keyword id="KW-0812">Transmembrane</keyword>
<keyword id="KW-1133">Transmembrane helix</keyword>
<keyword id="KW-0813">Transport</keyword>